<evidence type="ECO:0000255" key="1">
    <source>
        <dbReference type="HAMAP-Rule" id="MF_00268"/>
    </source>
</evidence>
<evidence type="ECO:0000256" key="2">
    <source>
        <dbReference type="SAM" id="MobiDB-lite"/>
    </source>
</evidence>
<comment type="function">
    <text evidence="1">Can catalyze the hydrolysis of ATP in the presence of single-stranded DNA, the ATP-dependent uptake of single-stranded DNA by duplex DNA, and the ATP-dependent hybridization of homologous single-stranded DNAs. It interacts with LexA causing its activation and leading to its autocatalytic cleavage.</text>
</comment>
<comment type="subcellular location">
    <subcellularLocation>
        <location evidence="1">Cytoplasm</location>
    </subcellularLocation>
</comment>
<comment type="similarity">
    <text evidence="1">Belongs to the RecA family.</text>
</comment>
<reference key="1">
    <citation type="submission" date="2006-09" db="EMBL/GenBank/DDBJ databases">
        <title>Complete sequence of chromosome 1 of Shewanella sp. ANA-3.</title>
        <authorList>
            <person name="Copeland A."/>
            <person name="Lucas S."/>
            <person name="Lapidus A."/>
            <person name="Barry K."/>
            <person name="Detter J.C."/>
            <person name="Glavina del Rio T."/>
            <person name="Hammon N."/>
            <person name="Israni S."/>
            <person name="Dalin E."/>
            <person name="Tice H."/>
            <person name="Pitluck S."/>
            <person name="Chertkov O."/>
            <person name="Brettin T."/>
            <person name="Bruce D."/>
            <person name="Han C."/>
            <person name="Tapia R."/>
            <person name="Gilna P."/>
            <person name="Schmutz J."/>
            <person name="Larimer F."/>
            <person name="Land M."/>
            <person name="Hauser L."/>
            <person name="Kyrpides N."/>
            <person name="Kim E."/>
            <person name="Newman D."/>
            <person name="Salticov C."/>
            <person name="Konstantinidis K."/>
            <person name="Klappenback J."/>
            <person name="Tiedje J."/>
            <person name="Richardson P."/>
        </authorList>
    </citation>
    <scope>NUCLEOTIDE SEQUENCE [LARGE SCALE GENOMIC DNA]</scope>
    <source>
        <strain>ANA-3</strain>
    </source>
</reference>
<accession>A0KU92</accession>
<protein>
    <recommendedName>
        <fullName evidence="1">Protein RecA</fullName>
    </recommendedName>
    <alternativeName>
        <fullName evidence="1">Recombinase A</fullName>
    </alternativeName>
</protein>
<keyword id="KW-0067">ATP-binding</keyword>
<keyword id="KW-0963">Cytoplasm</keyword>
<keyword id="KW-0227">DNA damage</keyword>
<keyword id="KW-0233">DNA recombination</keyword>
<keyword id="KW-0234">DNA repair</keyword>
<keyword id="KW-0238">DNA-binding</keyword>
<keyword id="KW-0547">Nucleotide-binding</keyword>
<keyword id="KW-0742">SOS response</keyword>
<dbReference type="EMBL" id="CP000469">
    <property type="protein sequence ID" value="ABK47361.1"/>
    <property type="molecule type" value="Genomic_DNA"/>
</dbReference>
<dbReference type="RefSeq" id="WP_011716225.1">
    <property type="nucleotide sequence ID" value="NC_008577.1"/>
</dbReference>
<dbReference type="SMR" id="A0KU92"/>
<dbReference type="STRING" id="94122.Shewana3_1126"/>
<dbReference type="GeneID" id="94727125"/>
<dbReference type="KEGG" id="shn:Shewana3_1126"/>
<dbReference type="eggNOG" id="COG0468">
    <property type="taxonomic scope" value="Bacteria"/>
</dbReference>
<dbReference type="HOGENOM" id="CLU_040469_3_2_6"/>
<dbReference type="OrthoDB" id="9776733at2"/>
<dbReference type="Proteomes" id="UP000002589">
    <property type="component" value="Chromosome"/>
</dbReference>
<dbReference type="GO" id="GO:0005829">
    <property type="term" value="C:cytosol"/>
    <property type="evidence" value="ECO:0007669"/>
    <property type="project" value="TreeGrafter"/>
</dbReference>
<dbReference type="GO" id="GO:0005524">
    <property type="term" value="F:ATP binding"/>
    <property type="evidence" value="ECO:0007669"/>
    <property type="project" value="UniProtKB-UniRule"/>
</dbReference>
<dbReference type="GO" id="GO:0016887">
    <property type="term" value="F:ATP hydrolysis activity"/>
    <property type="evidence" value="ECO:0007669"/>
    <property type="project" value="InterPro"/>
</dbReference>
<dbReference type="GO" id="GO:0140664">
    <property type="term" value="F:ATP-dependent DNA damage sensor activity"/>
    <property type="evidence" value="ECO:0007669"/>
    <property type="project" value="InterPro"/>
</dbReference>
<dbReference type="GO" id="GO:0003684">
    <property type="term" value="F:damaged DNA binding"/>
    <property type="evidence" value="ECO:0007669"/>
    <property type="project" value="UniProtKB-UniRule"/>
</dbReference>
<dbReference type="GO" id="GO:0003697">
    <property type="term" value="F:single-stranded DNA binding"/>
    <property type="evidence" value="ECO:0007669"/>
    <property type="project" value="UniProtKB-UniRule"/>
</dbReference>
<dbReference type="GO" id="GO:0006310">
    <property type="term" value="P:DNA recombination"/>
    <property type="evidence" value="ECO:0007669"/>
    <property type="project" value="UniProtKB-UniRule"/>
</dbReference>
<dbReference type="GO" id="GO:0006281">
    <property type="term" value="P:DNA repair"/>
    <property type="evidence" value="ECO:0007669"/>
    <property type="project" value="UniProtKB-UniRule"/>
</dbReference>
<dbReference type="GO" id="GO:0009432">
    <property type="term" value="P:SOS response"/>
    <property type="evidence" value="ECO:0007669"/>
    <property type="project" value="UniProtKB-UniRule"/>
</dbReference>
<dbReference type="CDD" id="cd00983">
    <property type="entry name" value="RecA"/>
    <property type="match status" value="1"/>
</dbReference>
<dbReference type="FunFam" id="3.40.50.300:FF:000087">
    <property type="entry name" value="Recombinase RecA"/>
    <property type="match status" value="1"/>
</dbReference>
<dbReference type="Gene3D" id="3.40.50.300">
    <property type="entry name" value="P-loop containing nucleotide triphosphate hydrolases"/>
    <property type="match status" value="1"/>
</dbReference>
<dbReference type="HAMAP" id="MF_00268">
    <property type="entry name" value="RecA"/>
    <property type="match status" value="1"/>
</dbReference>
<dbReference type="InterPro" id="IPR003593">
    <property type="entry name" value="AAA+_ATPase"/>
</dbReference>
<dbReference type="InterPro" id="IPR013765">
    <property type="entry name" value="DNA_recomb/repair_RecA"/>
</dbReference>
<dbReference type="InterPro" id="IPR020584">
    <property type="entry name" value="DNA_recomb/repair_RecA_CS"/>
</dbReference>
<dbReference type="InterPro" id="IPR027417">
    <property type="entry name" value="P-loop_NTPase"/>
</dbReference>
<dbReference type="InterPro" id="IPR049261">
    <property type="entry name" value="RecA-like_C"/>
</dbReference>
<dbReference type="InterPro" id="IPR049428">
    <property type="entry name" value="RecA-like_N"/>
</dbReference>
<dbReference type="InterPro" id="IPR020588">
    <property type="entry name" value="RecA_ATP-bd"/>
</dbReference>
<dbReference type="InterPro" id="IPR023400">
    <property type="entry name" value="RecA_C_sf"/>
</dbReference>
<dbReference type="InterPro" id="IPR020587">
    <property type="entry name" value="RecA_monomer-monomer_interface"/>
</dbReference>
<dbReference type="NCBIfam" id="TIGR02012">
    <property type="entry name" value="tigrfam_recA"/>
    <property type="match status" value="1"/>
</dbReference>
<dbReference type="PANTHER" id="PTHR45900:SF1">
    <property type="entry name" value="MITOCHONDRIAL DNA REPAIR PROTEIN RECA HOMOLOG-RELATED"/>
    <property type="match status" value="1"/>
</dbReference>
<dbReference type="PANTHER" id="PTHR45900">
    <property type="entry name" value="RECA"/>
    <property type="match status" value="1"/>
</dbReference>
<dbReference type="Pfam" id="PF00154">
    <property type="entry name" value="RecA"/>
    <property type="match status" value="1"/>
</dbReference>
<dbReference type="Pfam" id="PF21096">
    <property type="entry name" value="RecA_C"/>
    <property type="match status" value="1"/>
</dbReference>
<dbReference type="PRINTS" id="PR00142">
    <property type="entry name" value="RECA"/>
</dbReference>
<dbReference type="SMART" id="SM00382">
    <property type="entry name" value="AAA"/>
    <property type="match status" value="1"/>
</dbReference>
<dbReference type="SUPFAM" id="SSF52540">
    <property type="entry name" value="P-loop containing nucleoside triphosphate hydrolases"/>
    <property type="match status" value="1"/>
</dbReference>
<dbReference type="SUPFAM" id="SSF54752">
    <property type="entry name" value="RecA protein, C-terminal domain"/>
    <property type="match status" value="1"/>
</dbReference>
<dbReference type="PROSITE" id="PS00321">
    <property type="entry name" value="RECA_1"/>
    <property type="match status" value="1"/>
</dbReference>
<dbReference type="PROSITE" id="PS50162">
    <property type="entry name" value="RECA_2"/>
    <property type="match status" value="1"/>
</dbReference>
<dbReference type="PROSITE" id="PS50163">
    <property type="entry name" value="RECA_3"/>
    <property type="match status" value="1"/>
</dbReference>
<name>RECA_SHESA</name>
<gene>
    <name evidence="1" type="primary">recA</name>
    <name type="ordered locus">Shewana3_1126</name>
</gene>
<organism>
    <name type="scientific">Shewanella sp. (strain ANA-3)</name>
    <dbReference type="NCBI Taxonomy" id="94122"/>
    <lineage>
        <taxon>Bacteria</taxon>
        <taxon>Pseudomonadati</taxon>
        <taxon>Pseudomonadota</taxon>
        <taxon>Gammaproteobacteria</taxon>
        <taxon>Alteromonadales</taxon>
        <taxon>Shewanellaceae</taxon>
        <taxon>Shewanella</taxon>
    </lineage>
</organism>
<feature type="chain" id="PRO_1000047997" description="Protein RecA">
    <location>
        <begin position="1"/>
        <end position="357"/>
    </location>
</feature>
<feature type="region of interest" description="Disordered" evidence="2">
    <location>
        <begin position="332"/>
        <end position="357"/>
    </location>
</feature>
<feature type="binding site" evidence="1">
    <location>
        <begin position="67"/>
        <end position="74"/>
    </location>
    <ligand>
        <name>ATP</name>
        <dbReference type="ChEBI" id="CHEBI:30616"/>
    </ligand>
</feature>
<sequence>MKVDPNKEKALAAVLSQIEKQFGKGSIMKLGEDRSMDVETISTGSLSLDVALGAGGLPMGRIVEIYGPESSGKTTLTLEVIAAAQREGKTCAFIDAEHALDPIYAKKLGVDIDNLLCSQPDTGEQALEICDALTRSGAVDVIIVDSVAALTPKAEIEGEIGDSHMGLAARMMSQAMRKLAGNLKQSNTLLIFINQIRMKIGVMFGNPETTTGGNALKFYASVRLDIRRTGAIKEGDEVVGNETRVKVVKNKVAAPFKQAEFQILYGQGINRTGELVDLGVAHKLIEKAGAWYSYKGDKIGQGRANAGKYLTENPAIAAEIDKTLRELLLSNPSAMSSSSSDDENSEGNVDFETGEVF</sequence>
<proteinExistence type="inferred from homology"/>